<sequence>MKASLADARLYLCVDSRRRQGDLPAFLDAVLGAGVDVVQLREKGLEAKEELRLLDVFAEACRRHGALLAVNDRADIAYAARSDVLHLGQDDLPVGIARSIVGDDVVIGLSTHSVEQVQAAVSDPAVDYFCVGPCWPTPTKPGRPAAGLDVVRYAAQAAGDRPWFAIGGINLQNLDEVLEAGARRVVVVRAIADAPDPAEAAAEFAARLAAAA</sequence>
<evidence type="ECO:0000255" key="1">
    <source>
        <dbReference type="HAMAP-Rule" id="MF_00097"/>
    </source>
</evidence>
<gene>
    <name evidence="1" type="primary">thiE</name>
    <name type="ordered locus">Acel_0990</name>
</gene>
<comment type="function">
    <text evidence="1">Condenses 4-methyl-5-(beta-hydroxyethyl)thiazole monophosphate (THZ-P) and 2-methyl-4-amino-5-hydroxymethyl pyrimidine pyrophosphate (HMP-PP) to form thiamine monophosphate (TMP).</text>
</comment>
<comment type="catalytic activity">
    <reaction evidence="1">
        <text>2-[(2R,5Z)-2-carboxy-4-methylthiazol-5(2H)-ylidene]ethyl phosphate + 4-amino-2-methyl-5-(diphosphooxymethyl)pyrimidine + 2 H(+) = thiamine phosphate + CO2 + diphosphate</text>
        <dbReference type="Rhea" id="RHEA:47844"/>
        <dbReference type="ChEBI" id="CHEBI:15378"/>
        <dbReference type="ChEBI" id="CHEBI:16526"/>
        <dbReference type="ChEBI" id="CHEBI:33019"/>
        <dbReference type="ChEBI" id="CHEBI:37575"/>
        <dbReference type="ChEBI" id="CHEBI:57841"/>
        <dbReference type="ChEBI" id="CHEBI:62899"/>
        <dbReference type="EC" id="2.5.1.3"/>
    </reaction>
</comment>
<comment type="catalytic activity">
    <reaction evidence="1">
        <text>2-(2-carboxy-4-methylthiazol-5-yl)ethyl phosphate + 4-amino-2-methyl-5-(diphosphooxymethyl)pyrimidine + 2 H(+) = thiamine phosphate + CO2 + diphosphate</text>
        <dbReference type="Rhea" id="RHEA:47848"/>
        <dbReference type="ChEBI" id="CHEBI:15378"/>
        <dbReference type="ChEBI" id="CHEBI:16526"/>
        <dbReference type="ChEBI" id="CHEBI:33019"/>
        <dbReference type="ChEBI" id="CHEBI:37575"/>
        <dbReference type="ChEBI" id="CHEBI:57841"/>
        <dbReference type="ChEBI" id="CHEBI:62890"/>
        <dbReference type="EC" id="2.5.1.3"/>
    </reaction>
</comment>
<comment type="catalytic activity">
    <reaction evidence="1">
        <text>4-methyl-5-(2-phosphooxyethyl)-thiazole + 4-amino-2-methyl-5-(diphosphooxymethyl)pyrimidine + H(+) = thiamine phosphate + diphosphate</text>
        <dbReference type="Rhea" id="RHEA:22328"/>
        <dbReference type="ChEBI" id="CHEBI:15378"/>
        <dbReference type="ChEBI" id="CHEBI:33019"/>
        <dbReference type="ChEBI" id="CHEBI:37575"/>
        <dbReference type="ChEBI" id="CHEBI:57841"/>
        <dbReference type="ChEBI" id="CHEBI:58296"/>
        <dbReference type="EC" id="2.5.1.3"/>
    </reaction>
</comment>
<comment type="cofactor">
    <cofactor evidence="1">
        <name>Mg(2+)</name>
        <dbReference type="ChEBI" id="CHEBI:18420"/>
    </cofactor>
    <text evidence="1">Binds 1 Mg(2+) ion per subunit.</text>
</comment>
<comment type="pathway">
    <text evidence="1">Cofactor biosynthesis; thiamine diphosphate biosynthesis; thiamine phosphate from 4-amino-2-methyl-5-diphosphomethylpyrimidine and 4-methyl-5-(2-phosphoethyl)-thiazole: step 1/1.</text>
</comment>
<comment type="similarity">
    <text evidence="1">Belongs to the thiamine-phosphate synthase family.</text>
</comment>
<organism>
    <name type="scientific">Acidothermus cellulolyticus (strain ATCC 43068 / DSM 8971 / 11B)</name>
    <dbReference type="NCBI Taxonomy" id="351607"/>
    <lineage>
        <taxon>Bacteria</taxon>
        <taxon>Bacillati</taxon>
        <taxon>Actinomycetota</taxon>
        <taxon>Actinomycetes</taxon>
        <taxon>Acidothermales</taxon>
        <taxon>Acidothermaceae</taxon>
        <taxon>Acidothermus</taxon>
    </lineage>
</organism>
<keyword id="KW-0460">Magnesium</keyword>
<keyword id="KW-0479">Metal-binding</keyword>
<keyword id="KW-1185">Reference proteome</keyword>
<keyword id="KW-0784">Thiamine biosynthesis</keyword>
<keyword id="KW-0808">Transferase</keyword>
<dbReference type="EC" id="2.5.1.3" evidence="1"/>
<dbReference type="EMBL" id="CP000481">
    <property type="protein sequence ID" value="ABK52763.1"/>
    <property type="molecule type" value="Genomic_DNA"/>
</dbReference>
<dbReference type="RefSeq" id="WP_011719826.1">
    <property type="nucleotide sequence ID" value="NC_008578.1"/>
</dbReference>
<dbReference type="SMR" id="A0LTK3"/>
<dbReference type="FunCoup" id="A0LTK3">
    <property type="interactions" value="116"/>
</dbReference>
<dbReference type="STRING" id="351607.Acel_0990"/>
<dbReference type="KEGG" id="ace:Acel_0990"/>
<dbReference type="eggNOG" id="COG0352">
    <property type="taxonomic scope" value="Bacteria"/>
</dbReference>
<dbReference type="HOGENOM" id="CLU_018272_3_0_11"/>
<dbReference type="InParanoid" id="A0LTK3"/>
<dbReference type="OrthoDB" id="3243336at2"/>
<dbReference type="UniPathway" id="UPA00060">
    <property type="reaction ID" value="UER00141"/>
</dbReference>
<dbReference type="Proteomes" id="UP000008221">
    <property type="component" value="Chromosome"/>
</dbReference>
<dbReference type="GO" id="GO:0005737">
    <property type="term" value="C:cytoplasm"/>
    <property type="evidence" value="ECO:0007669"/>
    <property type="project" value="TreeGrafter"/>
</dbReference>
<dbReference type="GO" id="GO:0000287">
    <property type="term" value="F:magnesium ion binding"/>
    <property type="evidence" value="ECO:0007669"/>
    <property type="project" value="UniProtKB-UniRule"/>
</dbReference>
<dbReference type="GO" id="GO:0004789">
    <property type="term" value="F:thiamine-phosphate diphosphorylase activity"/>
    <property type="evidence" value="ECO:0007669"/>
    <property type="project" value="UniProtKB-UniRule"/>
</dbReference>
<dbReference type="GO" id="GO:0009228">
    <property type="term" value="P:thiamine biosynthetic process"/>
    <property type="evidence" value="ECO:0007669"/>
    <property type="project" value="UniProtKB-KW"/>
</dbReference>
<dbReference type="GO" id="GO:0009229">
    <property type="term" value="P:thiamine diphosphate biosynthetic process"/>
    <property type="evidence" value="ECO:0007669"/>
    <property type="project" value="UniProtKB-UniRule"/>
</dbReference>
<dbReference type="CDD" id="cd00564">
    <property type="entry name" value="TMP_TenI"/>
    <property type="match status" value="1"/>
</dbReference>
<dbReference type="FunFam" id="3.20.20.70:FF:000178">
    <property type="entry name" value="Thiamine-phosphate synthase"/>
    <property type="match status" value="1"/>
</dbReference>
<dbReference type="Gene3D" id="3.20.20.70">
    <property type="entry name" value="Aldolase class I"/>
    <property type="match status" value="1"/>
</dbReference>
<dbReference type="HAMAP" id="MF_00097">
    <property type="entry name" value="TMP_synthase"/>
    <property type="match status" value="1"/>
</dbReference>
<dbReference type="InterPro" id="IPR013785">
    <property type="entry name" value="Aldolase_TIM"/>
</dbReference>
<dbReference type="InterPro" id="IPR036206">
    <property type="entry name" value="ThiamineP_synth_sf"/>
</dbReference>
<dbReference type="InterPro" id="IPR022998">
    <property type="entry name" value="ThiamineP_synth_TenI"/>
</dbReference>
<dbReference type="InterPro" id="IPR034291">
    <property type="entry name" value="TMP_synthase"/>
</dbReference>
<dbReference type="NCBIfam" id="TIGR00693">
    <property type="entry name" value="thiE"/>
    <property type="match status" value="1"/>
</dbReference>
<dbReference type="PANTHER" id="PTHR20857">
    <property type="entry name" value="THIAMINE-PHOSPHATE PYROPHOSPHORYLASE"/>
    <property type="match status" value="1"/>
</dbReference>
<dbReference type="PANTHER" id="PTHR20857:SF15">
    <property type="entry name" value="THIAMINE-PHOSPHATE SYNTHASE"/>
    <property type="match status" value="1"/>
</dbReference>
<dbReference type="Pfam" id="PF02581">
    <property type="entry name" value="TMP-TENI"/>
    <property type="match status" value="1"/>
</dbReference>
<dbReference type="SUPFAM" id="SSF51391">
    <property type="entry name" value="Thiamin phosphate synthase"/>
    <property type="match status" value="1"/>
</dbReference>
<protein>
    <recommendedName>
        <fullName evidence="1">Thiamine-phosphate synthase</fullName>
        <shortName evidence="1">TP synthase</shortName>
        <shortName evidence="1">TPS</shortName>
        <ecNumber evidence="1">2.5.1.3</ecNumber>
    </recommendedName>
    <alternativeName>
        <fullName evidence="1">Thiamine-phosphate pyrophosphorylase</fullName>
        <shortName evidence="1">TMP pyrophosphorylase</shortName>
        <shortName evidence="1">TMP-PPase</shortName>
    </alternativeName>
</protein>
<name>THIE_ACIC1</name>
<proteinExistence type="inferred from homology"/>
<reference key="1">
    <citation type="journal article" date="2009" name="Genome Res.">
        <title>Complete genome of the cellulolytic thermophile Acidothermus cellulolyticus 11B provides insights into its ecophysiological and evolutionary adaptations.</title>
        <authorList>
            <person name="Barabote R.D."/>
            <person name="Xie G."/>
            <person name="Leu D.H."/>
            <person name="Normand P."/>
            <person name="Necsulea A."/>
            <person name="Daubin V."/>
            <person name="Medigue C."/>
            <person name="Adney W.S."/>
            <person name="Xu X.C."/>
            <person name="Lapidus A."/>
            <person name="Parales R.E."/>
            <person name="Detter C."/>
            <person name="Pujic P."/>
            <person name="Bruce D."/>
            <person name="Lavire C."/>
            <person name="Challacombe J.F."/>
            <person name="Brettin T.S."/>
            <person name="Berry A.M."/>
        </authorList>
    </citation>
    <scope>NUCLEOTIDE SEQUENCE [LARGE SCALE GENOMIC DNA]</scope>
    <source>
        <strain>ATCC 43068 / DSM 8971 / 11B</strain>
    </source>
</reference>
<accession>A0LTK3</accession>
<feature type="chain" id="PRO_0000336368" description="Thiamine-phosphate synthase">
    <location>
        <begin position="1"/>
        <end position="212"/>
    </location>
</feature>
<feature type="binding site" evidence="1">
    <location>
        <begin position="39"/>
        <end position="43"/>
    </location>
    <ligand>
        <name>4-amino-2-methyl-5-(diphosphooxymethyl)pyrimidine</name>
        <dbReference type="ChEBI" id="CHEBI:57841"/>
    </ligand>
</feature>
<feature type="binding site" evidence="1">
    <location>
        <position position="71"/>
    </location>
    <ligand>
        <name>4-amino-2-methyl-5-(diphosphooxymethyl)pyrimidine</name>
        <dbReference type="ChEBI" id="CHEBI:57841"/>
    </ligand>
</feature>
<feature type="binding site" evidence="1">
    <location>
        <position position="72"/>
    </location>
    <ligand>
        <name>Mg(2+)</name>
        <dbReference type="ChEBI" id="CHEBI:18420"/>
    </ligand>
</feature>
<feature type="binding site" evidence="1">
    <location>
        <position position="91"/>
    </location>
    <ligand>
        <name>Mg(2+)</name>
        <dbReference type="ChEBI" id="CHEBI:18420"/>
    </ligand>
</feature>
<feature type="binding site" evidence="1">
    <location>
        <position position="110"/>
    </location>
    <ligand>
        <name>4-amino-2-methyl-5-(diphosphooxymethyl)pyrimidine</name>
        <dbReference type="ChEBI" id="CHEBI:57841"/>
    </ligand>
</feature>
<feature type="binding site" evidence="1">
    <location>
        <begin position="137"/>
        <end position="139"/>
    </location>
    <ligand>
        <name>2-[(2R,5Z)-2-carboxy-4-methylthiazol-5(2H)-ylidene]ethyl phosphate</name>
        <dbReference type="ChEBI" id="CHEBI:62899"/>
    </ligand>
</feature>
<feature type="binding site" evidence="1">
    <location>
        <position position="140"/>
    </location>
    <ligand>
        <name>4-amino-2-methyl-5-(diphosphooxymethyl)pyrimidine</name>
        <dbReference type="ChEBI" id="CHEBI:57841"/>
    </ligand>
</feature>
<feature type="binding site" evidence="1">
    <location>
        <position position="168"/>
    </location>
    <ligand>
        <name>2-[(2R,5Z)-2-carboxy-4-methylthiazol-5(2H)-ylidene]ethyl phosphate</name>
        <dbReference type="ChEBI" id="CHEBI:62899"/>
    </ligand>
</feature>